<feature type="chain" id="PRO_0000194127" description="DNA replication licensing factor REC">
    <location>
        <begin position="1"/>
        <end position="885"/>
    </location>
</feature>
<feature type="domain" description="MCM">
    <location>
        <begin position="430"/>
        <end position="627"/>
    </location>
</feature>
<feature type="zinc finger region" description="C4-type" evidence="2">
    <location>
        <begin position="281"/>
        <end position="308"/>
    </location>
</feature>
<feature type="region of interest" description="Disordered" evidence="3">
    <location>
        <begin position="36"/>
        <end position="76"/>
    </location>
</feature>
<feature type="region of interest" description="Disordered" evidence="3">
    <location>
        <begin position="796"/>
        <end position="818"/>
    </location>
</feature>
<feature type="compositionally biased region" description="Polar residues" evidence="3">
    <location>
        <begin position="796"/>
        <end position="805"/>
    </location>
</feature>
<feature type="compositionally biased region" description="Gly residues" evidence="3">
    <location>
        <begin position="806"/>
        <end position="817"/>
    </location>
</feature>
<feature type="binding site" evidence="2">
    <location>
        <begin position="473"/>
        <end position="480"/>
    </location>
    <ligand>
        <name>ATP</name>
        <dbReference type="ChEBI" id="CHEBI:30616"/>
    </ligand>
</feature>
<feature type="sequence variant" evidence="4">
    <original>Y</original>
    <variation>H</variation>
    <location>
        <position position="118"/>
    </location>
</feature>
<feature type="sequence variant" evidence="4">
    <original>V</original>
    <variation>A</variation>
    <location>
        <position position="422"/>
    </location>
</feature>
<feature type="mutagenesis site" description="In rec3; temperature-sensitive allele. Recombination-defective." evidence="4">
    <original>S</original>
    <variation>F</variation>
    <location>
        <position position="455"/>
    </location>
</feature>
<reference key="1">
    <citation type="journal article" date="2003" name="Genes Genet. Syst.">
        <title>REC, a new member of the MCM-related protein family, is required for meiotic recombination in Drosophila.</title>
        <authorList>
            <person name="Matsubayashi H."/>
            <person name="Yamamoto M.-T."/>
        </authorList>
    </citation>
    <scope>NUCLEOTIDE SEQUENCE</scope>
    <scope>FUNCTION</scope>
    <scope>VARIANTS HIS-118 AND ALA-422</scope>
    <scope>MUTAGENESIS OF SER-455</scope>
    <source>
        <strain>Berkeley</strain>
        <strain>Canton-S</strain>
        <tissue>Ovary</tissue>
    </source>
</reference>
<reference key="2">
    <citation type="journal article" date="2000" name="Science">
        <title>The genome sequence of Drosophila melanogaster.</title>
        <authorList>
            <person name="Adams M.D."/>
            <person name="Celniker S.E."/>
            <person name="Holt R.A."/>
            <person name="Evans C.A."/>
            <person name="Gocayne J.D."/>
            <person name="Amanatides P.G."/>
            <person name="Scherer S.E."/>
            <person name="Li P.W."/>
            <person name="Hoskins R.A."/>
            <person name="Galle R.F."/>
            <person name="George R.A."/>
            <person name="Lewis S.E."/>
            <person name="Richards S."/>
            <person name="Ashburner M."/>
            <person name="Henderson S.N."/>
            <person name="Sutton G.G."/>
            <person name="Wortman J.R."/>
            <person name="Yandell M.D."/>
            <person name="Zhang Q."/>
            <person name="Chen L.X."/>
            <person name="Brandon R.C."/>
            <person name="Rogers Y.-H.C."/>
            <person name="Blazej R.G."/>
            <person name="Champe M."/>
            <person name="Pfeiffer B.D."/>
            <person name="Wan K.H."/>
            <person name="Doyle C."/>
            <person name="Baxter E.G."/>
            <person name="Helt G."/>
            <person name="Nelson C.R."/>
            <person name="Miklos G.L.G."/>
            <person name="Abril J.F."/>
            <person name="Agbayani A."/>
            <person name="An H.-J."/>
            <person name="Andrews-Pfannkoch C."/>
            <person name="Baldwin D."/>
            <person name="Ballew R.M."/>
            <person name="Basu A."/>
            <person name="Baxendale J."/>
            <person name="Bayraktaroglu L."/>
            <person name="Beasley E.M."/>
            <person name="Beeson K.Y."/>
            <person name="Benos P.V."/>
            <person name="Berman B.P."/>
            <person name="Bhandari D."/>
            <person name="Bolshakov S."/>
            <person name="Borkova D."/>
            <person name="Botchan M.R."/>
            <person name="Bouck J."/>
            <person name="Brokstein P."/>
            <person name="Brottier P."/>
            <person name="Burtis K.C."/>
            <person name="Busam D.A."/>
            <person name="Butler H."/>
            <person name="Cadieu E."/>
            <person name="Center A."/>
            <person name="Chandra I."/>
            <person name="Cherry J.M."/>
            <person name="Cawley S."/>
            <person name="Dahlke C."/>
            <person name="Davenport L.B."/>
            <person name="Davies P."/>
            <person name="de Pablos B."/>
            <person name="Delcher A."/>
            <person name="Deng Z."/>
            <person name="Mays A.D."/>
            <person name="Dew I."/>
            <person name="Dietz S.M."/>
            <person name="Dodson K."/>
            <person name="Doup L.E."/>
            <person name="Downes M."/>
            <person name="Dugan-Rocha S."/>
            <person name="Dunkov B.C."/>
            <person name="Dunn P."/>
            <person name="Durbin K.J."/>
            <person name="Evangelista C.C."/>
            <person name="Ferraz C."/>
            <person name="Ferriera S."/>
            <person name="Fleischmann W."/>
            <person name="Fosler C."/>
            <person name="Gabrielian A.E."/>
            <person name="Garg N.S."/>
            <person name="Gelbart W.M."/>
            <person name="Glasser K."/>
            <person name="Glodek A."/>
            <person name="Gong F."/>
            <person name="Gorrell J.H."/>
            <person name="Gu Z."/>
            <person name="Guan P."/>
            <person name="Harris M."/>
            <person name="Harris N.L."/>
            <person name="Harvey D.A."/>
            <person name="Heiman T.J."/>
            <person name="Hernandez J.R."/>
            <person name="Houck J."/>
            <person name="Hostin D."/>
            <person name="Houston K.A."/>
            <person name="Howland T.J."/>
            <person name="Wei M.-H."/>
            <person name="Ibegwam C."/>
            <person name="Jalali M."/>
            <person name="Kalush F."/>
            <person name="Karpen G.H."/>
            <person name="Ke Z."/>
            <person name="Kennison J.A."/>
            <person name="Ketchum K.A."/>
            <person name="Kimmel B.E."/>
            <person name="Kodira C.D."/>
            <person name="Kraft C.L."/>
            <person name="Kravitz S."/>
            <person name="Kulp D."/>
            <person name="Lai Z."/>
            <person name="Lasko P."/>
            <person name="Lei Y."/>
            <person name="Levitsky A.A."/>
            <person name="Li J.H."/>
            <person name="Li Z."/>
            <person name="Liang Y."/>
            <person name="Lin X."/>
            <person name="Liu X."/>
            <person name="Mattei B."/>
            <person name="McIntosh T.C."/>
            <person name="McLeod M.P."/>
            <person name="McPherson D."/>
            <person name="Merkulov G."/>
            <person name="Milshina N.V."/>
            <person name="Mobarry C."/>
            <person name="Morris J."/>
            <person name="Moshrefi A."/>
            <person name="Mount S.M."/>
            <person name="Moy M."/>
            <person name="Murphy B."/>
            <person name="Murphy L."/>
            <person name="Muzny D.M."/>
            <person name="Nelson D.L."/>
            <person name="Nelson D.R."/>
            <person name="Nelson K.A."/>
            <person name="Nixon K."/>
            <person name="Nusskern D.R."/>
            <person name="Pacleb J.M."/>
            <person name="Palazzolo M."/>
            <person name="Pittman G.S."/>
            <person name="Pan S."/>
            <person name="Pollard J."/>
            <person name="Puri V."/>
            <person name="Reese M.G."/>
            <person name="Reinert K."/>
            <person name="Remington K."/>
            <person name="Saunders R.D.C."/>
            <person name="Scheeler F."/>
            <person name="Shen H."/>
            <person name="Shue B.C."/>
            <person name="Siden-Kiamos I."/>
            <person name="Simpson M."/>
            <person name="Skupski M.P."/>
            <person name="Smith T.J."/>
            <person name="Spier E."/>
            <person name="Spradling A.C."/>
            <person name="Stapleton M."/>
            <person name="Strong R."/>
            <person name="Sun E."/>
            <person name="Svirskas R."/>
            <person name="Tector C."/>
            <person name="Turner R."/>
            <person name="Venter E."/>
            <person name="Wang A.H."/>
            <person name="Wang X."/>
            <person name="Wang Z.-Y."/>
            <person name="Wassarman D.A."/>
            <person name="Weinstock G.M."/>
            <person name="Weissenbach J."/>
            <person name="Williams S.M."/>
            <person name="Woodage T."/>
            <person name="Worley K.C."/>
            <person name="Wu D."/>
            <person name="Yang S."/>
            <person name="Yao Q.A."/>
            <person name="Ye J."/>
            <person name="Yeh R.-F."/>
            <person name="Zaveri J.S."/>
            <person name="Zhan M."/>
            <person name="Zhang G."/>
            <person name="Zhao Q."/>
            <person name="Zheng L."/>
            <person name="Zheng X.H."/>
            <person name="Zhong F.N."/>
            <person name="Zhong W."/>
            <person name="Zhou X."/>
            <person name="Zhu S.C."/>
            <person name="Zhu X."/>
            <person name="Smith H.O."/>
            <person name="Gibbs R.A."/>
            <person name="Myers E.W."/>
            <person name="Rubin G.M."/>
            <person name="Venter J.C."/>
        </authorList>
    </citation>
    <scope>NUCLEOTIDE SEQUENCE [LARGE SCALE GENOMIC DNA]</scope>
    <source>
        <strain>Berkeley</strain>
    </source>
</reference>
<reference key="3">
    <citation type="journal article" date="2002" name="Genome Biol.">
        <title>Annotation of the Drosophila melanogaster euchromatic genome: a systematic review.</title>
        <authorList>
            <person name="Misra S."/>
            <person name="Crosby M.A."/>
            <person name="Mungall C.J."/>
            <person name="Matthews B.B."/>
            <person name="Campbell K.S."/>
            <person name="Hradecky P."/>
            <person name="Huang Y."/>
            <person name="Kaminker J.S."/>
            <person name="Millburn G.H."/>
            <person name="Prochnik S.E."/>
            <person name="Smith C.D."/>
            <person name="Tupy J.L."/>
            <person name="Whitfield E.J."/>
            <person name="Bayraktaroglu L."/>
            <person name="Berman B.P."/>
            <person name="Bettencourt B.R."/>
            <person name="Celniker S.E."/>
            <person name="de Grey A.D.N.J."/>
            <person name="Drysdale R.A."/>
            <person name="Harris N.L."/>
            <person name="Richter J."/>
            <person name="Russo S."/>
            <person name="Schroeder A.J."/>
            <person name="Shu S.Q."/>
            <person name="Stapleton M."/>
            <person name="Yamada C."/>
            <person name="Ashburner M."/>
            <person name="Gelbart W.M."/>
            <person name="Rubin G.M."/>
            <person name="Lewis S.E."/>
        </authorList>
    </citation>
    <scope>GENOME REANNOTATION</scope>
    <source>
        <strain>Berkeley</strain>
    </source>
</reference>
<accession>Q9VF30</accession>
<sequence length="885" mass="97585">MNPTLSRGGAPSRFVRGRGRGGGAYRPYFYFRRNGRVIPAGGNRQPNQGEPGAPDAPSVPPATRQPRGWSRTAGKRGRNAHLDCSFLRPENYAAPEDGLQVQSIAVDNPRAYSGWRLYFLREKYEEGNELATRIMAVEAYYQRNPHTFDFVMIRDRGFFPLCAAGIKSDAQLKEVWPSLSEDIREHPLRTLGTLSLAMHTVVVNHQLDCNDSTTAMVSTPEQYVLPTPRVRKIYARPDDFVPVESIEGISHSRVDTLFSIRGFVSNVGEPSYSLTWQAFRCSRCQMEIAMRQRGTFQPRPYQCKRSECVARDEFVPLRSSPYTRLSIRQIIRVEESSLNLVHDFETSMPAEMDVELRHDLVDAVRVGQEVVVTGILKLQELGDDTTTGDTSNQMQPYLKAVSIRDASSIKREFSERDLEAIVMINAEPNSFKLLVQSIAPEVYGHELPKAACLLSLLGGKGAETEAINVLLVGDPGIGKTKILQSCAQIAERGAHVSGKRGAQSAQQLGVTFAGRNKRVLQAGSLMMASGGGHCTLDDVDKLASKQAVLLQCLQSEEVNLPLAGAFASFPAQPSVIACANPQRGQYDEGRYLLQNINISPSLLREFHLVYILLDKPSERDMSLTAHVRALHAGARKRARIAARYALKPKMSDSMCEVSLNVPAAGKDDDTIKTEDDNDSIMQQDYDLDKRLEVLPEEGDLDLLPPILIKKFLSYARQELNPVLNEDASNAVLRYFLELKGSCNLDEDVSSQIGAGQLLAIIHLSQARARLDLSHVVSPQHVRDVIALLTESITQTSLKEGSSRQGTRGGGGAGGGAGKSAQLRNFLELTKRRSAALGRRIFEFDELKEIGTRAGILTGFSQLVEMANLGGYLLMKGANMYEVVPD</sequence>
<name>MCMR_DROME</name>
<dbReference type="EMBL" id="AB120941">
    <property type="protein sequence ID" value="BAC92698.1"/>
    <property type="molecule type" value="mRNA"/>
</dbReference>
<dbReference type="EMBL" id="AB120942">
    <property type="protein sequence ID" value="BAC92699.1"/>
    <property type="molecule type" value="mRNA"/>
</dbReference>
<dbReference type="EMBL" id="AB120943">
    <property type="protein sequence ID" value="BAC92700.1"/>
    <property type="molecule type" value="mRNA"/>
</dbReference>
<dbReference type="EMBL" id="AB120944">
    <property type="protein sequence ID" value="BAC92701.1"/>
    <property type="molecule type" value="Genomic_DNA"/>
</dbReference>
<dbReference type="EMBL" id="AB120945">
    <property type="protein sequence ID" value="BAC92702.1"/>
    <property type="molecule type" value="Genomic_DNA"/>
</dbReference>
<dbReference type="EMBL" id="AB120946">
    <property type="protein sequence ID" value="BAC92703.1"/>
    <property type="molecule type" value="Genomic_DNA"/>
</dbReference>
<dbReference type="EMBL" id="AB120947">
    <property type="protein sequence ID" value="BAC92704.1"/>
    <property type="molecule type" value="Genomic_DNA"/>
</dbReference>
<dbReference type="EMBL" id="AB120948">
    <property type="protein sequence ID" value="BAC92705.1"/>
    <property type="molecule type" value="Genomic_DNA"/>
</dbReference>
<dbReference type="EMBL" id="AB120949">
    <property type="protein sequence ID" value="BAC92706.1"/>
    <property type="molecule type" value="Genomic_DNA"/>
</dbReference>
<dbReference type="EMBL" id="AB120950">
    <property type="protein sequence ID" value="BAC92707.1"/>
    <property type="molecule type" value="Genomic_DNA"/>
</dbReference>
<dbReference type="EMBL" id="AB120951">
    <property type="protein sequence ID" value="BAC92708.1"/>
    <property type="molecule type" value="mRNA"/>
</dbReference>
<dbReference type="EMBL" id="AB120952">
    <property type="protein sequence ID" value="BAC92709.1"/>
    <property type="molecule type" value="Genomic_DNA"/>
</dbReference>
<dbReference type="EMBL" id="AB120953">
    <property type="protein sequence ID" value="BAC92710.1"/>
    <property type="molecule type" value="mRNA"/>
</dbReference>
<dbReference type="EMBL" id="AE014297">
    <property type="protein sequence ID" value="AAF55231.2"/>
    <property type="molecule type" value="Genomic_DNA"/>
</dbReference>
<dbReference type="RefSeq" id="NP_001262615.1">
    <property type="nucleotide sequence ID" value="NM_001275686.1"/>
</dbReference>
<dbReference type="RefSeq" id="NP_732072.1">
    <property type="nucleotide sequence ID" value="NM_169674.2"/>
</dbReference>
<dbReference type="SMR" id="Q9VF30"/>
<dbReference type="BioGRID" id="72108">
    <property type="interactions" value="4"/>
</dbReference>
<dbReference type="DIP" id="DIP-61892N"/>
<dbReference type="FunCoup" id="Q9VF30">
    <property type="interactions" value="286"/>
</dbReference>
<dbReference type="IntAct" id="Q9VF30">
    <property type="interactions" value="4"/>
</dbReference>
<dbReference type="STRING" id="7227.FBpp0082647"/>
<dbReference type="PaxDb" id="7227-FBpp0082647"/>
<dbReference type="EnsemblMetazoa" id="FBtr0083193">
    <property type="protein sequence ID" value="FBpp0082647"/>
    <property type="gene ID" value="FBgn0003227"/>
</dbReference>
<dbReference type="EnsemblMetazoa" id="FBtr0334595">
    <property type="protein sequence ID" value="FBpp0306662"/>
    <property type="gene ID" value="FBgn0003227"/>
</dbReference>
<dbReference type="GeneID" id="49241"/>
<dbReference type="KEGG" id="dme:Dmel_CG31293"/>
<dbReference type="AGR" id="FB:FBgn0003227"/>
<dbReference type="CTD" id="49241"/>
<dbReference type="FlyBase" id="FBgn0003227">
    <property type="gene designation" value="rec"/>
</dbReference>
<dbReference type="VEuPathDB" id="VectorBase:FBgn0003227"/>
<dbReference type="eggNOG" id="KOG0478">
    <property type="taxonomic scope" value="Eukaryota"/>
</dbReference>
<dbReference type="GeneTree" id="ENSGT01110000267230"/>
<dbReference type="HOGENOM" id="CLU_000995_7_2_1"/>
<dbReference type="InParanoid" id="Q9VF30"/>
<dbReference type="OMA" id="RACSVQQ"/>
<dbReference type="OrthoDB" id="422555at2759"/>
<dbReference type="PhylomeDB" id="Q9VF30"/>
<dbReference type="Reactome" id="R-DME-176187">
    <property type="pathway name" value="Activation of ATR in response to replication stress"/>
</dbReference>
<dbReference type="Reactome" id="R-DME-68689">
    <property type="pathway name" value="CDC6 association with the ORC:origin complex"/>
</dbReference>
<dbReference type="Reactome" id="R-DME-68949">
    <property type="pathway name" value="Orc1 removal from chromatin"/>
</dbReference>
<dbReference type="Reactome" id="R-DME-68962">
    <property type="pathway name" value="Activation of the pre-replicative complex"/>
</dbReference>
<dbReference type="SignaLink" id="Q9VF30"/>
<dbReference type="BioGRID-ORCS" id="49241">
    <property type="hits" value="0 hits in 1 CRISPR screen"/>
</dbReference>
<dbReference type="GenomeRNAi" id="49241"/>
<dbReference type="PRO" id="PR:Q9VF30"/>
<dbReference type="Proteomes" id="UP000000803">
    <property type="component" value="Chromosome 3R"/>
</dbReference>
<dbReference type="Bgee" id="FBgn0003227">
    <property type="expression patterns" value="Expressed in egg cell and 13 other cell types or tissues"/>
</dbReference>
<dbReference type="ExpressionAtlas" id="Q9VF30">
    <property type="expression patterns" value="baseline and differential"/>
</dbReference>
<dbReference type="GO" id="GO:0042555">
    <property type="term" value="C:MCM complex"/>
    <property type="evidence" value="ECO:0000318"/>
    <property type="project" value="GO_Central"/>
</dbReference>
<dbReference type="GO" id="GO:0005634">
    <property type="term" value="C:nucleus"/>
    <property type="evidence" value="ECO:0000318"/>
    <property type="project" value="GO_Central"/>
</dbReference>
<dbReference type="GO" id="GO:0005524">
    <property type="term" value="F:ATP binding"/>
    <property type="evidence" value="ECO:0007669"/>
    <property type="project" value="UniProtKB-KW"/>
</dbReference>
<dbReference type="GO" id="GO:0008094">
    <property type="term" value="F:ATP-dependent activity, acting on DNA"/>
    <property type="evidence" value="ECO:0000304"/>
    <property type="project" value="UniProtKB"/>
</dbReference>
<dbReference type="GO" id="GO:0003678">
    <property type="term" value="F:DNA helicase activity"/>
    <property type="evidence" value="ECO:0000304"/>
    <property type="project" value="UniProtKB"/>
</dbReference>
<dbReference type="GO" id="GO:0003697">
    <property type="term" value="F:single-stranded DNA binding"/>
    <property type="evidence" value="ECO:0000318"/>
    <property type="project" value="GO_Central"/>
</dbReference>
<dbReference type="GO" id="GO:0008270">
    <property type="term" value="F:zinc ion binding"/>
    <property type="evidence" value="ECO:0007669"/>
    <property type="project" value="UniProtKB-KW"/>
</dbReference>
<dbReference type="GO" id="GO:0051301">
    <property type="term" value="P:cell division"/>
    <property type="evidence" value="ECO:0007669"/>
    <property type="project" value="UniProtKB-KW"/>
</dbReference>
<dbReference type="GO" id="GO:0006270">
    <property type="term" value="P:DNA replication initiation"/>
    <property type="evidence" value="ECO:0000304"/>
    <property type="project" value="UniProtKB"/>
</dbReference>
<dbReference type="GO" id="GO:0007131">
    <property type="term" value="P:reciprocal meiotic recombination"/>
    <property type="evidence" value="ECO:0000315"/>
    <property type="project" value="UniProtKB"/>
</dbReference>
<dbReference type="CDD" id="cd17759">
    <property type="entry name" value="MCM8"/>
    <property type="match status" value="1"/>
</dbReference>
<dbReference type="CDD" id="cd22247">
    <property type="entry name" value="MCM8_WHD"/>
    <property type="match status" value="1"/>
</dbReference>
<dbReference type="Gene3D" id="2.20.28.10">
    <property type="match status" value="1"/>
</dbReference>
<dbReference type="Gene3D" id="2.40.50.140">
    <property type="entry name" value="Nucleic acid-binding proteins"/>
    <property type="match status" value="1"/>
</dbReference>
<dbReference type="Gene3D" id="3.40.50.300">
    <property type="entry name" value="P-loop containing nucleotide triphosphate hydrolases"/>
    <property type="match status" value="1"/>
</dbReference>
<dbReference type="InterPro" id="IPR031327">
    <property type="entry name" value="MCM"/>
</dbReference>
<dbReference type="InterPro" id="IPR056875">
    <property type="entry name" value="MCM8/REC_WHD"/>
</dbReference>
<dbReference type="InterPro" id="IPR001208">
    <property type="entry name" value="MCM_dom"/>
</dbReference>
<dbReference type="InterPro" id="IPR041562">
    <property type="entry name" value="MCM_lid"/>
</dbReference>
<dbReference type="InterPro" id="IPR033762">
    <property type="entry name" value="MCM_OB"/>
</dbReference>
<dbReference type="InterPro" id="IPR012340">
    <property type="entry name" value="NA-bd_OB-fold"/>
</dbReference>
<dbReference type="InterPro" id="IPR027417">
    <property type="entry name" value="P-loop_NTPase"/>
</dbReference>
<dbReference type="PANTHER" id="PTHR11630:SF47">
    <property type="entry name" value="DNA HELICASE MCM8"/>
    <property type="match status" value="1"/>
</dbReference>
<dbReference type="PANTHER" id="PTHR11630">
    <property type="entry name" value="DNA REPLICATION LICENSING FACTOR MCM FAMILY MEMBER"/>
    <property type="match status" value="1"/>
</dbReference>
<dbReference type="Pfam" id="PF00493">
    <property type="entry name" value="MCM"/>
    <property type="match status" value="1"/>
</dbReference>
<dbReference type="Pfam" id="PF17855">
    <property type="entry name" value="MCM_lid"/>
    <property type="match status" value="1"/>
</dbReference>
<dbReference type="Pfam" id="PF17207">
    <property type="entry name" value="MCM_OB"/>
    <property type="match status" value="1"/>
</dbReference>
<dbReference type="Pfam" id="PF25051">
    <property type="entry name" value="WHD_MCM8"/>
    <property type="match status" value="1"/>
</dbReference>
<dbReference type="PRINTS" id="PR01657">
    <property type="entry name" value="MCMFAMILY"/>
</dbReference>
<dbReference type="SMART" id="SM00350">
    <property type="entry name" value="MCM"/>
    <property type="match status" value="1"/>
</dbReference>
<dbReference type="SUPFAM" id="SSF50249">
    <property type="entry name" value="Nucleic acid-binding proteins"/>
    <property type="match status" value="1"/>
</dbReference>
<dbReference type="SUPFAM" id="SSF52540">
    <property type="entry name" value="P-loop containing nucleoside triphosphate hydrolases"/>
    <property type="match status" value="1"/>
</dbReference>
<dbReference type="PROSITE" id="PS50051">
    <property type="entry name" value="MCM_2"/>
    <property type="match status" value="1"/>
</dbReference>
<organism>
    <name type="scientific">Drosophila melanogaster</name>
    <name type="common">Fruit fly</name>
    <dbReference type="NCBI Taxonomy" id="7227"/>
    <lineage>
        <taxon>Eukaryota</taxon>
        <taxon>Metazoa</taxon>
        <taxon>Ecdysozoa</taxon>
        <taxon>Arthropoda</taxon>
        <taxon>Hexapoda</taxon>
        <taxon>Insecta</taxon>
        <taxon>Pterygota</taxon>
        <taxon>Neoptera</taxon>
        <taxon>Endopterygota</taxon>
        <taxon>Diptera</taxon>
        <taxon>Brachycera</taxon>
        <taxon>Muscomorpha</taxon>
        <taxon>Ephydroidea</taxon>
        <taxon>Drosophilidae</taxon>
        <taxon>Drosophila</taxon>
        <taxon>Sophophora</taxon>
    </lineage>
</organism>
<keyword id="KW-0067">ATP-binding</keyword>
<keyword id="KW-0131">Cell cycle</keyword>
<keyword id="KW-0132">Cell division</keyword>
<keyword id="KW-0233">DNA recombination</keyword>
<keyword id="KW-0238">DNA-binding</keyword>
<keyword id="KW-0469">Meiosis</keyword>
<keyword id="KW-0479">Metal-binding</keyword>
<keyword id="KW-0547">Nucleotide-binding</keyword>
<keyword id="KW-0539">Nucleus</keyword>
<keyword id="KW-1185">Reference proteome</keyword>
<keyword id="KW-0862">Zinc</keyword>
<keyword id="KW-0863">Zinc-finger</keyword>
<comment type="function">
    <text evidence="4">Required for meiotic DNA recombination in females. Probably not involved in DNA repair and recombination in somatic cells.</text>
</comment>
<comment type="interaction">
    <interactant intactId="EBI-99278">
        <id>Q9VF30</id>
    </interactant>
    <interactant intactId="EBI-15133128">
        <id>Q86B50</id>
        <label>mei-217</label>
    </interactant>
    <organismsDiffer>false</organismsDiffer>
    <experiments>2</experiments>
</comment>
<comment type="subcellular location">
    <subcellularLocation>
        <location evidence="1">Nucleus</location>
    </subcellularLocation>
</comment>
<comment type="similarity">
    <text evidence="5">Belongs to the MCM family.</text>
</comment>
<evidence type="ECO:0000250" key="1"/>
<evidence type="ECO:0000255" key="2"/>
<evidence type="ECO:0000256" key="3">
    <source>
        <dbReference type="SAM" id="MobiDB-lite"/>
    </source>
</evidence>
<evidence type="ECO:0000269" key="4">
    <source>
    </source>
</evidence>
<evidence type="ECO:0000305" key="5"/>
<protein>
    <recommendedName>
        <fullName>DNA replication licensing factor REC</fullName>
    </recommendedName>
    <alternativeName>
        <fullName>Protein mini chromosome maintenance-related</fullName>
    </alternativeName>
    <alternativeName>
        <fullName>Protein recombination-defective</fullName>
    </alternativeName>
</protein>
<proteinExistence type="evidence at protein level"/>
<gene>
    <name type="primary">rec</name>
    <name type="ORF">CG31293</name>
</gene>